<proteinExistence type="evidence at transcript level"/>
<reference key="1">
    <citation type="journal article" date="2000" name="Science">
        <title>The genome sequence of Drosophila melanogaster.</title>
        <authorList>
            <person name="Adams M.D."/>
            <person name="Celniker S.E."/>
            <person name="Holt R.A."/>
            <person name="Evans C.A."/>
            <person name="Gocayne J.D."/>
            <person name="Amanatides P.G."/>
            <person name="Scherer S.E."/>
            <person name="Li P.W."/>
            <person name="Hoskins R.A."/>
            <person name="Galle R.F."/>
            <person name="George R.A."/>
            <person name="Lewis S.E."/>
            <person name="Richards S."/>
            <person name="Ashburner M."/>
            <person name="Henderson S.N."/>
            <person name="Sutton G.G."/>
            <person name="Wortman J.R."/>
            <person name="Yandell M.D."/>
            <person name="Zhang Q."/>
            <person name="Chen L.X."/>
            <person name="Brandon R.C."/>
            <person name="Rogers Y.-H.C."/>
            <person name="Blazej R.G."/>
            <person name="Champe M."/>
            <person name="Pfeiffer B.D."/>
            <person name="Wan K.H."/>
            <person name="Doyle C."/>
            <person name="Baxter E.G."/>
            <person name="Helt G."/>
            <person name="Nelson C.R."/>
            <person name="Miklos G.L.G."/>
            <person name="Abril J.F."/>
            <person name="Agbayani A."/>
            <person name="An H.-J."/>
            <person name="Andrews-Pfannkoch C."/>
            <person name="Baldwin D."/>
            <person name="Ballew R.M."/>
            <person name="Basu A."/>
            <person name="Baxendale J."/>
            <person name="Bayraktaroglu L."/>
            <person name="Beasley E.M."/>
            <person name="Beeson K.Y."/>
            <person name="Benos P.V."/>
            <person name="Berman B.P."/>
            <person name="Bhandari D."/>
            <person name="Bolshakov S."/>
            <person name="Borkova D."/>
            <person name="Botchan M.R."/>
            <person name="Bouck J."/>
            <person name="Brokstein P."/>
            <person name="Brottier P."/>
            <person name="Burtis K.C."/>
            <person name="Busam D.A."/>
            <person name="Butler H."/>
            <person name="Cadieu E."/>
            <person name="Center A."/>
            <person name="Chandra I."/>
            <person name="Cherry J.M."/>
            <person name="Cawley S."/>
            <person name="Dahlke C."/>
            <person name="Davenport L.B."/>
            <person name="Davies P."/>
            <person name="de Pablos B."/>
            <person name="Delcher A."/>
            <person name="Deng Z."/>
            <person name="Mays A.D."/>
            <person name="Dew I."/>
            <person name="Dietz S.M."/>
            <person name="Dodson K."/>
            <person name="Doup L.E."/>
            <person name="Downes M."/>
            <person name="Dugan-Rocha S."/>
            <person name="Dunkov B.C."/>
            <person name="Dunn P."/>
            <person name="Durbin K.J."/>
            <person name="Evangelista C.C."/>
            <person name="Ferraz C."/>
            <person name="Ferriera S."/>
            <person name="Fleischmann W."/>
            <person name="Fosler C."/>
            <person name="Gabrielian A.E."/>
            <person name="Garg N.S."/>
            <person name="Gelbart W.M."/>
            <person name="Glasser K."/>
            <person name="Glodek A."/>
            <person name="Gong F."/>
            <person name="Gorrell J.H."/>
            <person name="Gu Z."/>
            <person name="Guan P."/>
            <person name="Harris M."/>
            <person name="Harris N.L."/>
            <person name="Harvey D.A."/>
            <person name="Heiman T.J."/>
            <person name="Hernandez J.R."/>
            <person name="Houck J."/>
            <person name="Hostin D."/>
            <person name="Houston K.A."/>
            <person name="Howland T.J."/>
            <person name="Wei M.-H."/>
            <person name="Ibegwam C."/>
            <person name="Jalali M."/>
            <person name="Kalush F."/>
            <person name="Karpen G.H."/>
            <person name="Ke Z."/>
            <person name="Kennison J.A."/>
            <person name="Ketchum K.A."/>
            <person name="Kimmel B.E."/>
            <person name="Kodira C.D."/>
            <person name="Kraft C.L."/>
            <person name="Kravitz S."/>
            <person name="Kulp D."/>
            <person name="Lai Z."/>
            <person name="Lasko P."/>
            <person name="Lei Y."/>
            <person name="Levitsky A.A."/>
            <person name="Li J.H."/>
            <person name="Li Z."/>
            <person name="Liang Y."/>
            <person name="Lin X."/>
            <person name="Liu X."/>
            <person name="Mattei B."/>
            <person name="McIntosh T.C."/>
            <person name="McLeod M.P."/>
            <person name="McPherson D."/>
            <person name="Merkulov G."/>
            <person name="Milshina N.V."/>
            <person name="Mobarry C."/>
            <person name="Morris J."/>
            <person name="Moshrefi A."/>
            <person name="Mount S.M."/>
            <person name="Moy M."/>
            <person name="Murphy B."/>
            <person name="Murphy L."/>
            <person name="Muzny D.M."/>
            <person name="Nelson D.L."/>
            <person name="Nelson D.R."/>
            <person name="Nelson K.A."/>
            <person name="Nixon K."/>
            <person name="Nusskern D.R."/>
            <person name="Pacleb J.M."/>
            <person name="Palazzolo M."/>
            <person name="Pittman G.S."/>
            <person name="Pan S."/>
            <person name="Pollard J."/>
            <person name="Puri V."/>
            <person name="Reese M.G."/>
            <person name="Reinert K."/>
            <person name="Remington K."/>
            <person name="Saunders R.D.C."/>
            <person name="Scheeler F."/>
            <person name="Shen H."/>
            <person name="Shue B.C."/>
            <person name="Siden-Kiamos I."/>
            <person name="Simpson M."/>
            <person name="Skupski M.P."/>
            <person name="Smith T.J."/>
            <person name="Spier E."/>
            <person name="Spradling A.C."/>
            <person name="Stapleton M."/>
            <person name="Strong R."/>
            <person name="Sun E."/>
            <person name="Svirskas R."/>
            <person name="Tector C."/>
            <person name="Turner R."/>
            <person name="Venter E."/>
            <person name="Wang A.H."/>
            <person name="Wang X."/>
            <person name="Wang Z.-Y."/>
            <person name="Wassarman D.A."/>
            <person name="Weinstock G.M."/>
            <person name="Weissenbach J."/>
            <person name="Williams S.M."/>
            <person name="Woodage T."/>
            <person name="Worley K.C."/>
            <person name="Wu D."/>
            <person name="Yang S."/>
            <person name="Yao Q.A."/>
            <person name="Ye J."/>
            <person name="Yeh R.-F."/>
            <person name="Zaveri J.S."/>
            <person name="Zhan M."/>
            <person name="Zhang G."/>
            <person name="Zhao Q."/>
            <person name="Zheng L."/>
            <person name="Zheng X.H."/>
            <person name="Zhong F.N."/>
            <person name="Zhong W."/>
            <person name="Zhou X."/>
            <person name="Zhu S.C."/>
            <person name="Zhu X."/>
            <person name="Smith H.O."/>
            <person name="Gibbs R.A."/>
            <person name="Myers E.W."/>
            <person name="Rubin G.M."/>
            <person name="Venter J.C."/>
        </authorList>
    </citation>
    <scope>NUCLEOTIDE SEQUENCE [LARGE SCALE GENOMIC DNA]</scope>
    <source>
        <strain>Berkeley</strain>
    </source>
</reference>
<reference key="2">
    <citation type="journal article" date="2002" name="Genome Biol.">
        <title>Annotation of the Drosophila melanogaster euchromatic genome: a systematic review.</title>
        <authorList>
            <person name="Misra S."/>
            <person name="Crosby M.A."/>
            <person name="Mungall C.J."/>
            <person name="Matthews B.B."/>
            <person name="Campbell K.S."/>
            <person name="Hradecky P."/>
            <person name="Huang Y."/>
            <person name="Kaminker J.S."/>
            <person name="Millburn G.H."/>
            <person name="Prochnik S.E."/>
            <person name="Smith C.D."/>
            <person name="Tupy J.L."/>
            <person name="Whitfield E.J."/>
            <person name="Bayraktaroglu L."/>
            <person name="Berman B.P."/>
            <person name="Bettencourt B.R."/>
            <person name="Celniker S.E."/>
            <person name="de Grey A.D.N.J."/>
            <person name="Drysdale R.A."/>
            <person name="Harris N.L."/>
            <person name="Richter J."/>
            <person name="Russo S."/>
            <person name="Schroeder A.J."/>
            <person name="Shu S.Q."/>
            <person name="Stapleton M."/>
            <person name="Yamada C."/>
            <person name="Ashburner M."/>
            <person name="Gelbart W.M."/>
            <person name="Rubin G.M."/>
            <person name="Lewis S.E."/>
        </authorList>
    </citation>
    <scope>GENOME REANNOTATION</scope>
    <source>
        <strain>Berkeley</strain>
    </source>
</reference>
<reference key="3">
    <citation type="journal article" date="2002" name="Genome Biol.">
        <title>A Drosophila full-length cDNA resource.</title>
        <authorList>
            <person name="Stapleton M."/>
            <person name="Carlson J.W."/>
            <person name="Brokstein P."/>
            <person name="Yu C."/>
            <person name="Champe M."/>
            <person name="George R.A."/>
            <person name="Guarin H."/>
            <person name="Kronmiller B."/>
            <person name="Pacleb J.M."/>
            <person name="Park S."/>
            <person name="Wan K.H."/>
            <person name="Rubin G.M."/>
            <person name="Celniker S.E."/>
        </authorList>
    </citation>
    <scope>NUCLEOTIDE SEQUENCE [LARGE SCALE MRNA]</scope>
    <source>
        <strain>Berkeley</strain>
        <tissue>Head</tissue>
    </source>
</reference>
<comment type="function">
    <text evidence="1">May be involved in the metabolism of insect hormones and in the breakdown of synthetic insecticides.</text>
</comment>
<comment type="cofactor">
    <cofactor evidence="1">
        <name>heme</name>
        <dbReference type="ChEBI" id="CHEBI:30413"/>
    </cofactor>
</comment>
<comment type="subcellular location">
    <subcellularLocation>
        <location evidence="2">Endoplasmic reticulum membrane</location>
        <topology evidence="2">Peripheral membrane protein</topology>
    </subcellularLocation>
    <subcellularLocation>
        <location evidence="2">Microsome membrane</location>
        <topology evidence="2">Peripheral membrane protein</topology>
    </subcellularLocation>
</comment>
<comment type="similarity">
    <text evidence="2">Belongs to the cytochrome P450 family.</text>
</comment>
<accession>Q9V4T5</accession>
<protein>
    <recommendedName>
        <fullName>Probable cytochrome P450 4e1</fullName>
        <ecNumber>1.14.-.-</ecNumber>
    </recommendedName>
    <alternativeName>
        <fullName>CYPIVE1</fullName>
    </alternativeName>
</protein>
<sequence>MWIVLCAFLALPLFLVTYFELGLLRRKRMLNKFQGPSMLPLVGNAHQMGNTPTEILNRFFGWWHEYGKDNFRYWIGYYSNIMVTNPKYMEFILSSQTLISKSDVYDLTHPWLGLGLLTSTGSKWHKHRKMITPAFHFNILQDFHEVMNENSTKFIDQLKKVADGGNIFDFQEEAHYLTLDVICDTAMGVSINAMENRSSSVVQAFKDITYTIKMRAFSPWKRNKYLFHFAPEYPEYSKTLKTLQDFTNEIIAKRIEVRKSGLEVGIKADEFSRKKMAFLDTLLSSKVDGRPLTSQELYEEVSTFMFEGHDTTTSGVGFAVYLLSRHPDEQEKLFNEQCDVMGASGLGRDATFQEISTMKHLDLFIKEAQRLYPSVPFIGRFTEKDYVIDGDIVPKGTTLNLGLLMLGYNDRVFKDPHKFQPERFDREKPGPFEYVPFSAGPRNCIGQKFALLEIKTVVSKIIRNFEVLPALDELVSKDGYISTTLGLQPAEKKSRDAHNHKYDPILSASMTLKSENGLHLRMKQRLVCDST</sequence>
<organism>
    <name type="scientific">Drosophila melanogaster</name>
    <name type="common">Fruit fly</name>
    <dbReference type="NCBI Taxonomy" id="7227"/>
    <lineage>
        <taxon>Eukaryota</taxon>
        <taxon>Metazoa</taxon>
        <taxon>Ecdysozoa</taxon>
        <taxon>Arthropoda</taxon>
        <taxon>Hexapoda</taxon>
        <taxon>Insecta</taxon>
        <taxon>Pterygota</taxon>
        <taxon>Neoptera</taxon>
        <taxon>Endopterygota</taxon>
        <taxon>Diptera</taxon>
        <taxon>Brachycera</taxon>
        <taxon>Muscomorpha</taxon>
        <taxon>Ephydroidea</taxon>
        <taxon>Drosophilidae</taxon>
        <taxon>Drosophila</taxon>
        <taxon>Sophophora</taxon>
    </lineage>
</organism>
<feature type="chain" id="PRO_0000051840" description="Probable cytochrome P450 4e1">
    <location>
        <begin position="1"/>
        <end position="531"/>
    </location>
</feature>
<feature type="binding site" description="covalent" evidence="1">
    <location>
        <position position="307"/>
    </location>
    <ligand>
        <name>heme</name>
        <dbReference type="ChEBI" id="CHEBI:30413"/>
    </ligand>
</feature>
<feature type="binding site" description="axial binding residue" evidence="1">
    <location>
        <position position="444"/>
    </location>
    <ligand>
        <name>heme</name>
        <dbReference type="ChEBI" id="CHEBI:30413"/>
    </ligand>
    <ligandPart>
        <name>Fe</name>
        <dbReference type="ChEBI" id="CHEBI:18248"/>
    </ligandPart>
</feature>
<keyword id="KW-0256">Endoplasmic reticulum</keyword>
<keyword id="KW-0349">Heme</keyword>
<keyword id="KW-0408">Iron</keyword>
<keyword id="KW-0472">Membrane</keyword>
<keyword id="KW-0479">Metal-binding</keyword>
<keyword id="KW-0492">Microsome</keyword>
<keyword id="KW-0503">Monooxygenase</keyword>
<keyword id="KW-0560">Oxidoreductase</keyword>
<keyword id="KW-1185">Reference proteome</keyword>
<name>CP4E1_DROME</name>
<evidence type="ECO:0000250" key="1"/>
<evidence type="ECO:0000305" key="2"/>
<gene>
    <name type="primary">Cyp4e1</name>
    <name type="ORF">CG2062</name>
</gene>
<dbReference type="EC" id="1.14.-.-"/>
<dbReference type="EMBL" id="AE013599">
    <property type="protein sequence ID" value="AAF59090.1"/>
    <property type="molecule type" value="Genomic_DNA"/>
</dbReference>
<dbReference type="EMBL" id="AY118793">
    <property type="protein sequence ID" value="AAM50653.1"/>
    <property type="molecule type" value="mRNA"/>
</dbReference>
<dbReference type="RefSeq" id="NP_524771.1">
    <property type="nucleotide sequence ID" value="NM_080032.3"/>
</dbReference>
<dbReference type="SMR" id="Q9V4T5"/>
<dbReference type="BioGRID" id="69171">
    <property type="interactions" value="3"/>
</dbReference>
<dbReference type="FunCoup" id="Q9V4T5">
    <property type="interactions" value="9"/>
</dbReference>
<dbReference type="IntAct" id="Q9V4T5">
    <property type="interactions" value="2"/>
</dbReference>
<dbReference type="STRING" id="7227.FBpp0087825"/>
<dbReference type="PaxDb" id="7227-FBpp0087825"/>
<dbReference type="DNASU" id="44632"/>
<dbReference type="EnsemblMetazoa" id="FBtr0088746">
    <property type="protein sequence ID" value="FBpp0087825"/>
    <property type="gene ID" value="FBgn0015034"/>
</dbReference>
<dbReference type="GeneID" id="44632"/>
<dbReference type="KEGG" id="dme:Dmel_CG2062"/>
<dbReference type="AGR" id="FB:FBgn0015034"/>
<dbReference type="CTD" id="44632"/>
<dbReference type="FlyBase" id="FBgn0015034">
    <property type="gene designation" value="Cyp4e1"/>
</dbReference>
<dbReference type="VEuPathDB" id="VectorBase:FBgn0015034"/>
<dbReference type="eggNOG" id="KOG0157">
    <property type="taxonomic scope" value="Eukaryota"/>
</dbReference>
<dbReference type="GeneTree" id="ENSGT00940000165700"/>
<dbReference type="HOGENOM" id="CLU_001570_5_1_1"/>
<dbReference type="InParanoid" id="Q9V4T5"/>
<dbReference type="OMA" id="CAVFKRN"/>
<dbReference type="OrthoDB" id="1470350at2759"/>
<dbReference type="PhylomeDB" id="Q9V4T5"/>
<dbReference type="Reactome" id="R-DME-193144">
    <property type="pathway name" value="Estrogen biosynthesis"/>
</dbReference>
<dbReference type="Reactome" id="R-DME-211976">
    <property type="pathway name" value="Endogenous sterols"/>
</dbReference>
<dbReference type="BioGRID-ORCS" id="44632">
    <property type="hits" value="0 hits in 3 CRISPR screens"/>
</dbReference>
<dbReference type="GenomeRNAi" id="44632"/>
<dbReference type="PRO" id="PR:Q9V4T5"/>
<dbReference type="Proteomes" id="UP000000803">
    <property type="component" value="Chromosome 2R"/>
</dbReference>
<dbReference type="Bgee" id="FBgn0015034">
    <property type="expression patterns" value="Expressed in crop (Drosophila) and 39 other cell types or tissues"/>
</dbReference>
<dbReference type="GO" id="GO:0005789">
    <property type="term" value="C:endoplasmic reticulum membrane"/>
    <property type="evidence" value="ECO:0007669"/>
    <property type="project" value="UniProtKB-SubCell"/>
</dbReference>
<dbReference type="GO" id="GO:0020037">
    <property type="term" value="F:heme binding"/>
    <property type="evidence" value="ECO:0007669"/>
    <property type="project" value="InterPro"/>
</dbReference>
<dbReference type="GO" id="GO:0005506">
    <property type="term" value="F:iron ion binding"/>
    <property type="evidence" value="ECO:0007669"/>
    <property type="project" value="InterPro"/>
</dbReference>
<dbReference type="GO" id="GO:0004497">
    <property type="term" value="F:monooxygenase activity"/>
    <property type="evidence" value="ECO:0007669"/>
    <property type="project" value="UniProtKB-KW"/>
</dbReference>
<dbReference type="GO" id="GO:0016705">
    <property type="term" value="F:oxidoreductase activity, acting on paired donors, with incorporation or reduction of molecular oxygen"/>
    <property type="evidence" value="ECO:0007669"/>
    <property type="project" value="InterPro"/>
</dbReference>
<dbReference type="CDD" id="cd20628">
    <property type="entry name" value="CYP4"/>
    <property type="match status" value="1"/>
</dbReference>
<dbReference type="Gene3D" id="1.10.630.10">
    <property type="entry name" value="Cytochrome P450"/>
    <property type="match status" value="1"/>
</dbReference>
<dbReference type="InterPro" id="IPR001128">
    <property type="entry name" value="Cyt_P450"/>
</dbReference>
<dbReference type="InterPro" id="IPR017972">
    <property type="entry name" value="Cyt_P450_CS"/>
</dbReference>
<dbReference type="InterPro" id="IPR002401">
    <property type="entry name" value="Cyt_P450_E_grp-I"/>
</dbReference>
<dbReference type="InterPro" id="IPR036396">
    <property type="entry name" value="Cyt_P450_sf"/>
</dbReference>
<dbReference type="InterPro" id="IPR050196">
    <property type="entry name" value="Cytochrome_P450_Monoox"/>
</dbReference>
<dbReference type="PANTHER" id="PTHR24291:SF203">
    <property type="entry name" value="CYTOCHROME P450 4D1-RELATED"/>
    <property type="match status" value="1"/>
</dbReference>
<dbReference type="PANTHER" id="PTHR24291">
    <property type="entry name" value="CYTOCHROME P450 FAMILY 4"/>
    <property type="match status" value="1"/>
</dbReference>
<dbReference type="Pfam" id="PF00067">
    <property type="entry name" value="p450"/>
    <property type="match status" value="1"/>
</dbReference>
<dbReference type="PRINTS" id="PR00463">
    <property type="entry name" value="EP450I"/>
</dbReference>
<dbReference type="PRINTS" id="PR00385">
    <property type="entry name" value="P450"/>
</dbReference>
<dbReference type="SUPFAM" id="SSF48264">
    <property type="entry name" value="Cytochrome P450"/>
    <property type="match status" value="1"/>
</dbReference>
<dbReference type="PROSITE" id="PS00086">
    <property type="entry name" value="CYTOCHROME_P450"/>
    <property type="match status" value="1"/>
</dbReference>